<keyword id="KW-0687">Ribonucleoprotein</keyword>
<keyword id="KW-0689">Ribosomal protein</keyword>
<keyword id="KW-0694">RNA-binding</keyword>
<keyword id="KW-0699">rRNA-binding</keyword>
<gene>
    <name evidence="1" type="primary">rpsS</name>
    <name type="ordered locus">lwe2578</name>
</gene>
<sequence>MGRSLKKGPFVDDHLMKKVEAAAESEKKQVIKTWSRRSTIFPTFVGQTIAVYDGRKHVPVYVQEDMVGHKLGEFAPTRTYRGHAGDDKKTKR</sequence>
<organism>
    <name type="scientific">Listeria welshimeri serovar 6b (strain ATCC 35897 / DSM 20650 / CCUG 15529 / CIP 8149 / NCTC 11857 / SLCC 5334 / V8)</name>
    <dbReference type="NCBI Taxonomy" id="386043"/>
    <lineage>
        <taxon>Bacteria</taxon>
        <taxon>Bacillati</taxon>
        <taxon>Bacillota</taxon>
        <taxon>Bacilli</taxon>
        <taxon>Bacillales</taxon>
        <taxon>Listeriaceae</taxon>
        <taxon>Listeria</taxon>
    </lineage>
</organism>
<accession>A0ALW4</accession>
<comment type="function">
    <text evidence="1">Protein S19 forms a complex with S13 that binds strongly to the 16S ribosomal RNA.</text>
</comment>
<comment type="similarity">
    <text evidence="1">Belongs to the universal ribosomal protein uS19 family.</text>
</comment>
<name>RS19_LISW6</name>
<proteinExistence type="inferred from homology"/>
<feature type="chain" id="PRO_1000051071" description="Small ribosomal subunit protein uS19">
    <location>
        <begin position="1"/>
        <end position="92"/>
    </location>
</feature>
<reference key="1">
    <citation type="journal article" date="2006" name="J. Bacteriol.">
        <title>Whole-genome sequence of Listeria welshimeri reveals common steps in genome reduction with Listeria innocua as compared to Listeria monocytogenes.</title>
        <authorList>
            <person name="Hain T."/>
            <person name="Steinweg C."/>
            <person name="Kuenne C.T."/>
            <person name="Billion A."/>
            <person name="Ghai R."/>
            <person name="Chatterjee S.S."/>
            <person name="Domann E."/>
            <person name="Kaerst U."/>
            <person name="Goesmann A."/>
            <person name="Bekel T."/>
            <person name="Bartels D."/>
            <person name="Kaiser O."/>
            <person name="Meyer F."/>
            <person name="Puehler A."/>
            <person name="Weisshaar B."/>
            <person name="Wehland J."/>
            <person name="Liang C."/>
            <person name="Dandekar T."/>
            <person name="Lampidis R."/>
            <person name="Kreft J."/>
            <person name="Goebel W."/>
            <person name="Chakraborty T."/>
        </authorList>
    </citation>
    <scope>NUCLEOTIDE SEQUENCE [LARGE SCALE GENOMIC DNA]</scope>
    <source>
        <strain>ATCC 35897 / DSM 20650 / CCUG 15529 / CIP 8149 / NCTC 11857 / SLCC 5334 / V8</strain>
    </source>
</reference>
<protein>
    <recommendedName>
        <fullName evidence="1">Small ribosomal subunit protein uS19</fullName>
    </recommendedName>
    <alternativeName>
        <fullName evidence="2">30S ribosomal protein S19</fullName>
    </alternativeName>
</protein>
<dbReference type="EMBL" id="AM263198">
    <property type="protein sequence ID" value="CAK21996.1"/>
    <property type="molecule type" value="Genomic_DNA"/>
</dbReference>
<dbReference type="RefSeq" id="WP_003720946.1">
    <property type="nucleotide sequence ID" value="NC_008555.1"/>
</dbReference>
<dbReference type="SMR" id="A0ALW4"/>
<dbReference type="STRING" id="386043.lwe2578"/>
<dbReference type="GeneID" id="93236050"/>
<dbReference type="KEGG" id="lwe:lwe2578"/>
<dbReference type="eggNOG" id="COG0185">
    <property type="taxonomic scope" value="Bacteria"/>
</dbReference>
<dbReference type="HOGENOM" id="CLU_144911_0_1_9"/>
<dbReference type="OrthoDB" id="9797833at2"/>
<dbReference type="Proteomes" id="UP000000779">
    <property type="component" value="Chromosome"/>
</dbReference>
<dbReference type="GO" id="GO:0005737">
    <property type="term" value="C:cytoplasm"/>
    <property type="evidence" value="ECO:0007669"/>
    <property type="project" value="UniProtKB-ARBA"/>
</dbReference>
<dbReference type="GO" id="GO:0015935">
    <property type="term" value="C:small ribosomal subunit"/>
    <property type="evidence" value="ECO:0007669"/>
    <property type="project" value="InterPro"/>
</dbReference>
<dbReference type="GO" id="GO:0019843">
    <property type="term" value="F:rRNA binding"/>
    <property type="evidence" value="ECO:0007669"/>
    <property type="project" value="UniProtKB-UniRule"/>
</dbReference>
<dbReference type="GO" id="GO:0003735">
    <property type="term" value="F:structural constituent of ribosome"/>
    <property type="evidence" value="ECO:0007669"/>
    <property type="project" value="InterPro"/>
</dbReference>
<dbReference type="GO" id="GO:0000028">
    <property type="term" value="P:ribosomal small subunit assembly"/>
    <property type="evidence" value="ECO:0007669"/>
    <property type="project" value="TreeGrafter"/>
</dbReference>
<dbReference type="GO" id="GO:0006412">
    <property type="term" value="P:translation"/>
    <property type="evidence" value="ECO:0007669"/>
    <property type="project" value="UniProtKB-UniRule"/>
</dbReference>
<dbReference type="FunFam" id="3.30.860.10:FF:000001">
    <property type="entry name" value="30S ribosomal protein S19"/>
    <property type="match status" value="1"/>
</dbReference>
<dbReference type="Gene3D" id="3.30.860.10">
    <property type="entry name" value="30s Ribosomal Protein S19, Chain A"/>
    <property type="match status" value="1"/>
</dbReference>
<dbReference type="HAMAP" id="MF_00531">
    <property type="entry name" value="Ribosomal_uS19"/>
    <property type="match status" value="1"/>
</dbReference>
<dbReference type="InterPro" id="IPR002222">
    <property type="entry name" value="Ribosomal_uS19"/>
</dbReference>
<dbReference type="InterPro" id="IPR005732">
    <property type="entry name" value="Ribosomal_uS19_bac-type"/>
</dbReference>
<dbReference type="InterPro" id="IPR020934">
    <property type="entry name" value="Ribosomal_uS19_CS"/>
</dbReference>
<dbReference type="InterPro" id="IPR023575">
    <property type="entry name" value="Ribosomal_uS19_SF"/>
</dbReference>
<dbReference type="NCBIfam" id="TIGR01050">
    <property type="entry name" value="rpsS_bact"/>
    <property type="match status" value="1"/>
</dbReference>
<dbReference type="PANTHER" id="PTHR11880">
    <property type="entry name" value="RIBOSOMAL PROTEIN S19P FAMILY MEMBER"/>
    <property type="match status" value="1"/>
</dbReference>
<dbReference type="PANTHER" id="PTHR11880:SF8">
    <property type="entry name" value="SMALL RIBOSOMAL SUBUNIT PROTEIN US19M"/>
    <property type="match status" value="1"/>
</dbReference>
<dbReference type="Pfam" id="PF00203">
    <property type="entry name" value="Ribosomal_S19"/>
    <property type="match status" value="1"/>
</dbReference>
<dbReference type="PIRSF" id="PIRSF002144">
    <property type="entry name" value="Ribosomal_S19"/>
    <property type="match status" value="1"/>
</dbReference>
<dbReference type="PRINTS" id="PR00975">
    <property type="entry name" value="RIBOSOMALS19"/>
</dbReference>
<dbReference type="SUPFAM" id="SSF54570">
    <property type="entry name" value="Ribosomal protein S19"/>
    <property type="match status" value="1"/>
</dbReference>
<dbReference type="PROSITE" id="PS00323">
    <property type="entry name" value="RIBOSOMAL_S19"/>
    <property type="match status" value="1"/>
</dbReference>
<evidence type="ECO:0000255" key="1">
    <source>
        <dbReference type="HAMAP-Rule" id="MF_00531"/>
    </source>
</evidence>
<evidence type="ECO:0000305" key="2"/>